<feature type="chain" id="PRO_0000165377" description="S-adenosylmethionine:tRNA ribosyltransferase-isomerase">
    <location>
        <begin position="1"/>
        <end position="350"/>
    </location>
</feature>
<organism>
    <name type="scientific">Bacillus anthracis</name>
    <dbReference type="NCBI Taxonomy" id="1392"/>
    <lineage>
        <taxon>Bacteria</taxon>
        <taxon>Bacillati</taxon>
        <taxon>Bacillota</taxon>
        <taxon>Bacilli</taxon>
        <taxon>Bacillales</taxon>
        <taxon>Bacillaceae</taxon>
        <taxon>Bacillus</taxon>
        <taxon>Bacillus cereus group</taxon>
    </lineage>
</organism>
<sequence>MDINLFDFHLPEELIAQVPLEERETSRLMVLDRETGDIEHKHFTDILSYLHEGDCLVLNETKVMPARLHGVKEDTGAHIEVLLLKQEEGDKWETLVKPAKRVKEGTVISFGEGKLKATCTGTADQGGRQLEFSYDGIFYEILDELGEMPLPPYIKETLEDRDRYQTVYAKEIGSAAAPTAGLHFTEELLEKLKQKGVELAFITLHVGLGTFRPVSADTIEEHHMHAEYYHMSEETAALLNRVKENGGRIITVGTTSTRTLETIATDHDGKLCAASGWTDIFMYPGYEFKAIDGLITNFHLPKSTLIMLVSAFANRDNVLHAYNEAVKEKYRFFSFGDAMFVASHAKMGNK</sequence>
<reference key="1">
    <citation type="journal article" date="2003" name="Nature">
        <title>The genome sequence of Bacillus anthracis Ames and comparison to closely related bacteria.</title>
        <authorList>
            <person name="Read T.D."/>
            <person name="Peterson S.N."/>
            <person name="Tourasse N.J."/>
            <person name="Baillie L.W."/>
            <person name="Paulsen I.T."/>
            <person name="Nelson K.E."/>
            <person name="Tettelin H."/>
            <person name="Fouts D.E."/>
            <person name="Eisen J.A."/>
            <person name="Gill S.R."/>
            <person name="Holtzapple E.K."/>
            <person name="Okstad O.A."/>
            <person name="Helgason E."/>
            <person name="Rilstone J."/>
            <person name="Wu M."/>
            <person name="Kolonay J.F."/>
            <person name="Beanan M.J."/>
            <person name="Dodson R.J."/>
            <person name="Brinkac L.M."/>
            <person name="Gwinn M.L."/>
            <person name="DeBoy R.T."/>
            <person name="Madpu R."/>
            <person name="Daugherty S.C."/>
            <person name="Durkin A.S."/>
            <person name="Haft D.H."/>
            <person name="Nelson W.C."/>
            <person name="Peterson J.D."/>
            <person name="Pop M."/>
            <person name="Khouri H.M."/>
            <person name="Radune D."/>
            <person name="Benton J.L."/>
            <person name="Mahamoud Y."/>
            <person name="Jiang L."/>
            <person name="Hance I.R."/>
            <person name="Weidman J.F."/>
            <person name="Berry K.J."/>
            <person name="Plaut R.D."/>
            <person name="Wolf A.M."/>
            <person name="Watkins K.L."/>
            <person name="Nierman W.C."/>
            <person name="Hazen A."/>
            <person name="Cline R.T."/>
            <person name="Redmond C."/>
            <person name="Thwaite J.E."/>
            <person name="White O."/>
            <person name="Salzberg S.L."/>
            <person name="Thomason B."/>
            <person name="Friedlander A.M."/>
            <person name="Koehler T.M."/>
            <person name="Hanna P.C."/>
            <person name="Kolstoe A.-B."/>
            <person name="Fraser C.M."/>
        </authorList>
    </citation>
    <scope>NUCLEOTIDE SEQUENCE [LARGE SCALE GENOMIC DNA]</scope>
    <source>
        <strain>Ames / isolate Porton</strain>
    </source>
</reference>
<reference key="2">
    <citation type="journal article" date="2009" name="J. Bacteriol.">
        <title>The complete genome sequence of Bacillus anthracis Ames 'Ancestor'.</title>
        <authorList>
            <person name="Ravel J."/>
            <person name="Jiang L."/>
            <person name="Stanley S.T."/>
            <person name="Wilson M.R."/>
            <person name="Decker R.S."/>
            <person name="Read T.D."/>
            <person name="Worsham P."/>
            <person name="Keim P.S."/>
            <person name="Salzberg S.L."/>
            <person name="Fraser-Liggett C.M."/>
            <person name="Rasko D.A."/>
        </authorList>
    </citation>
    <scope>NUCLEOTIDE SEQUENCE [LARGE SCALE GENOMIC DNA]</scope>
    <source>
        <strain>Ames ancestor</strain>
    </source>
</reference>
<reference key="3">
    <citation type="submission" date="2004-01" db="EMBL/GenBank/DDBJ databases">
        <title>Complete genome sequence of Bacillus anthracis Sterne.</title>
        <authorList>
            <person name="Brettin T.S."/>
            <person name="Bruce D."/>
            <person name="Challacombe J.F."/>
            <person name="Gilna P."/>
            <person name="Han C."/>
            <person name="Hill K."/>
            <person name="Hitchcock P."/>
            <person name="Jackson P."/>
            <person name="Keim P."/>
            <person name="Longmire J."/>
            <person name="Lucas S."/>
            <person name="Okinaka R."/>
            <person name="Richardson P."/>
            <person name="Rubin E."/>
            <person name="Tice H."/>
        </authorList>
    </citation>
    <scope>NUCLEOTIDE SEQUENCE [LARGE SCALE GENOMIC DNA]</scope>
    <source>
        <strain>Sterne</strain>
    </source>
</reference>
<accession>Q81LH1</accession>
<accession>Q6HSX8</accession>
<accession>Q6KM66</accession>
<gene>
    <name evidence="1" type="primary">queA</name>
    <name type="ordered locus">BA_4648</name>
    <name type="ordered locus">GBAA_4648</name>
    <name type="ordered locus">BAS4313</name>
</gene>
<dbReference type="EC" id="2.4.99.17" evidence="1"/>
<dbReference type="EMBL" id="AE016879">
    <property type="protein sequence ID" value="AAP28351.1"/>
    <property type="molecule type" value="Genomic_DNA"/>
</dbReference>
<dbReference type="EMBL" id="AE017334">
    <property type="protein sequence ID" value="AAT33770.1"/>
    <property type="molecule type" value="Genomic_DNA"/>
</dbReference>
<dbReference type="EMBL" id="AE017225">
    <property type="protein sequence ID" value="AAT56611.1"/>
    <property type="molecule type" value="Genomic_DNA"/>
</dbReference>
<dbReference type="RefSeq" id="NP_846865.1">
    <property type="nucleotide sequence ID" value="NC_003997.3"/>
</dbReference>
<dbReference type="RefSeq" id="WP_000354028.1">
    <property type="nucleotide sequence ID" value="NZ_WXXJ01000027.1"/>
</dbReference>
<dbReference type="RefSeq" id="YP_030560.1">
    <property type="nucleotide sequence ID" value="NC_005945.1"/>
</dbReference>
<dbReference type="SMR" id="Q81LH1"/>
<dbReference type="STRING" id="261594.GBAA_4648"/>
<dbReference type="DNASU" id="1084883"/>
<dbReference type="GeneID" id="93006683"/>
<dbReference type="KEGG" id="ban:BA_4648"/>
<dbReference type="KEGG" id="bar:GBAA_4648"/>
<dbReference type="KEGG" id="bat:BAS4313"/>
<dbReference type="PATRIC" id="fig|198094.11.peg.4613"/>
<dbReference type="eggNOG" id="COG0809">
    <property type="taxonomic scope" value="Bacteria"/>
</dbReference>
<dbReference type="HOGENOM" id="CLU_039110_1_0_9"/>
<dbReference type="OMA" id="YSYGDGM"/>
<dbReference type="OrthoDB" id="9805933at2"/>
<dbReference type="UniPathway" id="UPA00392"/>
<dbReference type="Proteomes" id="UP000000427">
    <property type="component" value="Chromosome"/>
</dbReference>
<dbReference type="Proteomes" id="UP000000594">
    <property type="component" value="Chromosome"/>
</dbReference>
<dbReference type="GO" id="GO:0005737">
    <property type="term" value="C:cytoplasm"/>
    <property type="evidence" value="ECO:0007669"/>
    <property type="project" value="UniProtKB-SubCell"/>
</dbReference>
<dbReference type="GO" id="GO:0051075">
    <property type="term" value="F:S-adenosylmethionine:tRNA ribosyltransferase-isomerase activity"/>
    <property type="evidence" value="ECO:0007669"/>
    <property type="project" value="UniProtKB-EC"/>
</dbReference>
<dbReference type="GO" id="GO:0008616">
    <property type="term" value="P:queuosine biosynthetic process"/>
    <property type="evidence" value="ECO:0007669"/>
    <property type="project" value="UniProtKB-UniRule"/>
</dbReference>
<dbReference type="GO" id="GO:0002099">
    <property type="term" value="P:tRNA wobble guanine modification"/>
    <property type="evidence" value="ECO:0007669"/>
    <property type="project" value="TreeGrafter"/>
</dbReference>
<dbReference type="FunFam" id="2.40.10.240:FF:000002">
    <property type="entry name" value="S-adenosylmethionine:tRNA ribosyltransferase-isomerase"/>
    <property type="match status" value="1"/>
</dbReference>
<dbReference type="FunFam" id="3.40.1780.10:FF:000001">
    <property type="entry name" value="S-adenosylmethionine:tRNA ribosyltransferase-isomerase"/>
    <property type="match status" value="1"/>
</dbReference>
<dbReference type="Gene3D" id="2.40.10.240">
    <property type="entry name" value="QueA-like"/>
    <property type="match status" value="1"/>
</dbReference>
<dbReference type="Gene3D" id="3.40.1780.10">
    <property type="entry name" value="QueA-like"/>
    <property type="match status" value="1"/>
</dbReference>
<dbReference type="HAMAP" id="MF_00113">
    <property type="entry name" value="QueA"/>
    <property type="match status" value="1"/>
</dbReference>
<dbReference type="InterPro" id="IPR003699">
    <property type="entry name" value="QueA"/>
</dbReference>
<dbReference type="InterPro" id="IPR042118">
    <property type="entry name" value="QueA_dom1"/>
</dbReference>
<dbReference type="InterPro" id="IPR042119">
    <property type="entry name" value="QueA_dom2"/>
</dbReference>
<dbReference type="InterPro" id="IPR036100">
    <property type="entry name" value="QueA_sf"/>
</dbReference>
<dbReference type="NCBIfam" id="NF001140">
    <property type="entry name" value="PRK00147.1"/>
    <property type="match status" value="1"/>
</dbReference>
<dbReference type="NCBIfam" id="TIGR00113">
    <property type="entry name" value="queA"/>
    <property type="match status" value="1"/>
</dbReference>
<dbReference type="PANTHER" id="PTHR30307">
    <property type="entry name" value="S-ADENOSYLMETHIONINE:TRNA RIBOSYLTRANSFERASE-ISOMERASE"/>
    <property type="match status" value="1"/>
</dbReference>
<dbReference type="PANTHER" id="PTHR30307:SF0">
    <property type="entry name" value="S-ADENOSYLMETHIONINE:TRNA RIBOSYLTRANSFERASE-ISOMERASE"/>
    <property type="match status" value="1"/>
</dbReference>
<dbReference type="Pfam" id="PF02547">
    <property type="entry name" value="Queuosine_synth"/>
    <property type="match status" value="1"/>
</dbReference>
<dbReference type="SUPFAM" id="SSF111337">
    <property type="entry name" value="QueA-like"/>
    <property type="match status" value="1"/>
</dbReference>
<keyword id="KW-0963">Cytoplasm</keyword>
<keyword id="KW-0671">Queuosine biosynthesis</keyword>
<keyword id="KW-1185">Reference proteome</keyword>
<keyword id="KW-0949">S-adenosyl-L-methionine</keyword>
<keyword id="KW-0808">Transferase</keyword>
<protein>
    <recommendedName>
        <fullName evidence="1">S-adenosylmethionine:tRNA ribosyltransferase-isomerase</fullName>
        <ecNumber evidence="1">2.4.99.17</ecNumber>
    </recommendedName>
    <alternativeName>
        <fullName evidence="1">Queuosine biosynthesis protein QueA</fullName>
    </alternativeName>
</protein>
<evidence type="ECO:0000255" key="1">
    <source>
        <dbReference type="HAMAP-Rule" id="MF_00113"/>
    </source>
</evidence>
<name>QUEA_BACAN</name>
<proteinExistence type="inferred from homology"/>
<comment type="function">
    <text evidence="1">Transfers and isomerizes the ribose moiety from AdoMet to the 7-aminomethyl group of 7-deazaguanine (preQ1-tRNA) to give epoxyqueuosine (oQ-tRNA).</text>
</comment>
<comment type="catalytic activity">
    <reaction evidence="1">
        <text>7-aminomethyl-7-carbaguanosine(34) in tRNA + S-adenosyl-L-methionine = epoxyqueuosine(34) in tRNA + adenine + L-methionine + 2 H(+)</text>
        <dbReference type="Rhea" id="RHEA:32155"/>
        <dbReference type="Rhea" id="RHEA-COMP:10342"/>
        <dbReference type="Rhea" id="RHEA-COMP:18582"/>
        <dbReference type="ChEBI" id="CHEBI:15378"/>
        <dbReference type="ChEBI" id="CHEBI:16708"/>
        <dbReference type="ChEBI" id="CHEBI:57844"/>
        <dbReference type="ChEBI" id="CHEBI:59789"/>
        <dbReference type="ChEBI" id="CHEBI:82833"/>
        <dbReference type="ChEBI" id="CHEBI:194443"/>
        <dbReference type="EC" id="2.4.99.17"/>
    </reaction>
</comment>
<comment type="pathway">
    <text evidence="1">tRNA modification; tRNA-queuosine biosynthesis.</text>
</comment>
<comment type="subunit">
    <text evidence="1">Monomer.</text>
</comment>
<comment type="subcellular location">
    <subcellularLocation>
        <location evidence="1">Cytoplasm</location>
    </subcellularLocation>
</comment>
<comment type="similarity">
    <text evidence="1">Belongs to the QueA family.</text>
</comment>